<feature type="chain" id="PRO_0000206983" description="Exodeoxyribonuclease 7 small subunit">
    <location>
        <begin position="1"/>
        <end position="78"/>
    </location>
</feature>
<gene>
    <name evidence="1" type="primary">xseB</name>
</gene>
<reference key="1">
    <citation type="submission" date="2002-02" db="EMBL/GenBank/DDBJ databases">
        <title>Genetics of isoprenoid biosynthesis in Paracoccus zeaxanthinifaciens.</title>
        <authorList>
            <person name="Huembelin M."/>
        </authorList>
    </citation>
    <scope>NUCLEOTIDE SEQUENCE [GENOMIC DNA]</scope>
    <source>
        <strain>R114</strain>
    </source>
</reference>
<proteinExistence type="inferred from homology"/>
<organism>
    <name type="scientific">Paracoccus zeaxanthinifaciens</name>
    <dbReference type="NCBI Taxonomy" id="187400"/>
    <lineage>
        <taxon>Bacteria</taxon>
        <taxon>Pseudomonadati</taxon>
        <taxon>Pseudomonadota</taxon>
        <taxon>Alphaproteobacteria</taxon>
        <taxon>Rhodobacterales</taxon>
        <taxon>Paracoccaceae</taxon>
        <taxon>Paracoccus</taxon>
    </lineage>
</organism>
<dbReference type="EC" id="3.1.11.6" evidence="1"/>
<dbReference type="EMBL" id="AJ431697">
    <property type="protein sequence ID" value="CAD24424.1"/>
    <property type="molecule type" value="Genomic_DNA"/>
</dbReference>
<dbReference type="SMR" id="Q8L1H9"/>
<dbReference type="GO" id="GO:0005829">
    <property type="term" value="C:cytosol"/>
    <property type="evidence" value="ECO:0007669"/>
    <property type="project" value="TreeGrafter"/>
</dbReference>
<dbReference type="GO" id="GO:0009318">
    <property type="term" value="C:exodeoxyribonuclease VII complex"/>
    <property type="evidence" value="ECO:0007669"/>
    <property type="project" value="InterPro"/>
</dbReference>
<dbReference type="GO" id="GO:0008855">
    <property type="term" value="F:exodeoxyribonuclease VII activity"/>
    <property type="evidence" value="ECO:0007669"/>
    <property type="project" value="UniProtKB-UniRule"/>
</dbReference>
<dbReference type="GO" id="GO:0006308">
    <property type="term" value="P:DNA catabolic process"/>
    <property type="evidence" value="ECO:0007669"/>
    <property type="project" value="UniProtKB-UniRule"/>
</dbReference>
<dbReference type="Gene3D" id="1.10.287.1040">
    <property type="entry name" value="Exonuclease VII, small subunit"/>
    <property type="match status" value="1"/>
</dbReference>
<dbReference type="HAMAP" id="MF_00337">
    <property type="entry name" value="Exonuc_7_S"/>
    <property type="match status" value="1"/>
</dbReference>
<dbReference type="InterPro" id="IPR003761">
    <property type="entry name" value="Exonuc_VII_S"/>
</dbReference>
<dbReference type="InterPro" id="IPR037004">
    <property type="entry name" value="Exonuc_VII_ssu_sf"/>
</dbReference>
<dbReference type="NCBIfam" id="NF002139">
    <property type="entry name" value="PRK00977.1-3"/>
    <property type="match status" value="1"/>
</dbReference>
<dbReference type="NCBIfam" id="TIGR01280">
    <property type="entry name" value="xseB"/>
    <property type="match status" value="1"/>
</dbReference>
<dbReference type="PANTHER" id="PTHR34137">
    <property type="entry name" value="EXODEOXYRIBONUCLEASE 7 SMALL SUBUNIT"/>
    <property type="match status" value="1"/>
</dbReference>
<dbReference type="PANTHER" id="PTHR34137:SF1">
    <property type="entry name" value="EXODEOXYRIBONUCLEASE 7 SMALL SUBUNIT"/>
    <property type="match status" value="1"/>
</dbReference>
<dbReference type="Pfam" id="PF02609">
    <property type="entry name" value="Exonuc_VII_S"/>
    <property type="match status" value="1"/>
</dbReference>
<dbReference type="PIRSF" id="PIRSF006488">
    <property type="entry name" value="Exonuc_VII_S"/>
    <property type="match status" value="1"/>
</dbReference>
<dbReference type="SUPFAM" id="SSF116842">
    <property type="entry name" value="XseB-like"/>
    <property type="match status" value="1"/>
</dbReference>
<name>EX7S_PARZE</name>
<accession>Q8L1H9</accession>
<protein>
    <recommendedName>
        <fullName evidence="1">Exodeoxyribonuclease 7 small subunit</fullName>
        <ecNumber evidence="1">3.1.11.6</ecNumber>
    </recommendedName>
    <alternativeName>
        <fullName evidence="1">Exodeoxyribonuclease VII small subunit</fullName>
        <shortName evidence="1">Exonuclease VII small subunit</shortName>
    </alternativeName>
</protein>
<sequence length="78" mass="8492">MSDIQTLSFEEAMRELEATVGKLETGEATLEDSIALYERGAALRAHCETRLREAEERVEKITLAANGQPSGTEPAEGL</sequence>
<comment type="function">
    <text evidence="1">Bidirectionally degrades single-stranded DNA into large acid-insoluble oligonucleotides, which are then degraded further into small acid-soluble oligonucleotides.</text>
</comment>
<comment type="catalytic activity">
    <reaction evidence="1">
        <text>Exonucleolytic cleavage in either 5'- to 3'- or 3'- to 5'-direction to yield nucleoside 5'-phosphates.</text>
        <dbReference type="EC" id="3.1.11.6"/>
    </reaction>
</comment>
<comment type="subunit">
    <text evidence="1">Heterooligomer composed of large and small subunits.</text>
</comment>
<comment type="subcellular location">
    <subcellularLocation>
        <location evidence="1">Cytoplasm</location>
    </subcellularLocation>
</comment>
<comment type="similarity">
    <text evidence="1">Belongs to the XseB family.</text>
</comment>
<evidence type="ECO:0000255" key="1">
    <source>
        <dbReference type="HAMAP-Rule" id="MF_00337"/>
    </source>
</evidence>
<keyword id="KW-0963">Cytoplasm</keyword>
<keyword id="KW-0269">Exonuclease</keyword>
<keyword id="KW-0378">Hydrolase</keyword>
<keyword id="KW-0540">Nuclease</keyword>